<feature type="chain" id="PRO_0000432252" description="Trans-3-hydroxy-L-proline dehydratase">
    <location>
        <begin position="1"/>
        <end position="335"/>
    </location>
</feature>
<feature type="active site" description="Proton acceptor" evidence="1">
    <location>
        <position position="91"/>
    </location>
</feature>
<feature type="binding site" evidence="1">
    <location>
        <begin position="92"/>
        <end position="93"/>
    </location>
    <ligand>
        <name>substrate</name>
    </ligand>
</feature>
<feature type="binding site" evidence="1">
    <location>
        <position position="251"/>
    </location>
    <ligand>
        <name>substrate</name>
    </ligand>
</feature>
<feature type="binding site" evidence="1">
    <location>
        <begin position="256"/>
        <end position="257"/>
    </location>
    <ligand>
        <name>substrate</name>
    </ligand>
</feature>
<keyword id="KW-0456">Lyase</keyword>
<comment type="function">
    <text evidence="2 4">Catalyzes the dehydration of trans-3-hydroxy-L-proline (t3LHyp) to Delta(1)-pyrroline-2-carboxylate (Pyr2C). Is likely involved in a degradation pathway that converts t3LHyp to L-proline. Displays neither trans-4-hydroxy-L-proline (t4LHyp) epimerase nor proline racemase activity.</text>
</comment>
<comment type="catalytic activity">
    <reaction evidence="2">
        <text>trans-3-hydroxy-L-proline = 1-pyrroline-2-carboxylate + H2O</text>
        <dbReference type="Rhea" id="RHEA:10320"/>
        <dbReference type="ChEBI" id="CHEBI:15377"/>
        <dbReference type="ChEBI" id="CHEBI:39785"/>
        <dbReference type="ChEBI" id="CHEBI:57938"/>
        <dbReference type="EC" id="4.2.1.77"/>
    </reaction>
</comment>
<comment type="biophysicochemical properties">
    <kinetics>
        <KM evidence="2">13 mM for trans-4-hydroxy-L-proline</KM>
        <text evidence="2">kcat is 43 sec(-1) for t3LHyp dehydration.</text>
    </kinetics>
</comment>
<comment type="similarity">
    <text evidence="4">Belongs to the proline racemase family.</text>
</comment>
<dbReference type="EC" id="4.2.1.77" evidence="2"/>
<dbReference type="EMBL" id="CP000441">
    <property type="protein sequence ID" value="ABI89323.1"/>
    <property type="molecule type" value="Genomic_DNA"/>
</dbReference>
<dbReference type="RefSeq" id="WP_011658778.1">
    <property type="nucleotide sequence ID" value="NC_008391.1"/>
</dbReference>
<dbReference type="SMR" id="Q0B950"/>
<dbReference type="GeneID" id="93086762"/>
<dbReference type="KEGG" id="bam:Bamb_3769"/>
<dbReference type="PATRIC" id="fig|339670.21.peg.4013"/>
<dbReference type="eggNOG" id="COG3938">
    <property type="taxonomic scope" value="Bacteria"/>
</dbReference>
<dbReference type="SABIO-RK" id="Q0B950"/>
<dbReference type="Proteomes" id="UP000000662">
    <property type="component" value="Chromosome 2"/>
</dbReference>
<dbReference type="GO" id="GO:0050346">
    <property type="term" value="F:trans-L-3-hydroxyproline dehydratase activity"/>
    <property type="evidence" value="ECO:0000314"/>
    <property type="project" value="CACAO"/>
</dbReference>
<dbReference type="FunFam" id="3.10.310.10:FF:000029">
    <property type="entry name" value="Trans-3-hydroxy-L-proline dehydratase"/>
    <property type="match status" value="1"/>
</dbReference>
<dbReference type="Gene3D" id="3.10.310.10">
    <property type="entry name" value="Diaminopimelate Epimerase, Chain A, domain 1"/>
    <property type="match status" value="2"/>
</dbReference>
<dbReference type="InterPro" id="IPR053425">
    <property type="entry name" value="Hydroxyproline_Metab_Enz"/>
</dbReference>
<dbReference type="InterPro" id="IPR008794">
    <property type="entry name" value="Pro_racemase_fam"/>
</dbReference>
<dbReference type="NCBIfam" id="NF045511">
    <property type="entry name" value="TransHydProDhtase"/>
    <property type="match status" value="1"/>
</dbReference>
<dbReference type="PANTHER" id="PTHR33442">
    <property type="entry name" value="TRANS-3-HYDROXY-L-PROLINE DEHYDRATASE"/>
    <property type="match status" value="1"/>
</dbReference>
<dbReference type="PANTHER" id="PTHR33442:SF1">
    <property type="entry name" value="TRANS-3-HYDROXY-L-PROLINE DEHYDRATASE"/>
    <property type="match status" value="1"/>
</dbReference>
<dbReference type="Pfam" id="PF05544">
    <property type="entry name" value="Pro_racemase"/>
    <property type="match status" value="1"/>
</dbReference>
<dbReference type="PIRSF" id="PIRSF029792">
    <property type="entry name" value="Pro_racemase"/>
    <property type="match status" value="1"/>
</dbReference>
<dbReference type="SFLD" id="SFLDS00028">
    <property type="entry name" value="Proline_Racemase"/>
    <property type="match status" value="1"/>
</dbReference>
<dbReference type="SUPFAM" id="SSF54506">
    <property type="entry name" value="Diaminopimelate epimerase-like"/>
    <property type="match status" value="1"/>
</dbReference>
<evidence type="ECO:0000250" key="1">
    <source>
        <dbReference type="UniProtKB" id="Q4KGU2"/>
    </source>
</evidence>
<evidence type="ECO:0000269" key="2">
    <source>
    </source>
</evidence>
<evidence type="ECO:0000303" key="3">
    <source>
    </source>
</evidence>
<evidence type="ECO:0000305" key="4"/>
<evidence type="ECO:0000312" key="5">
    <source>
        <dbReference type="EMBL" id="ABI89323.1"/>
    </source>
</evidence>
<sequence length="335" mass="36384">MKISRSLSTVEVHTGGEAFRIVTSGLPRLPGDTIVQRRAWLKENADEIRRALMFEPRGHADMYGGYLTEPVSPTADFGVIFLHNEGYSDHCGHGVIALSTAAVELGWVQRTVPETRVGIDAPCGFIEAFVQWDGEHAGPVRFVNVPSFIWRRDVSVDTPSFGTVTGDIAYGGAFYFYVDGAPFDLPVREAAVEKLIRFGAEVKAAANAKYPVVHPEIPEINHIYGTIIANAPRHPGSTQANCCVFADREVDRSPTGSGTGGRVAQLYQRGVLAAGDTLVNESIVGTVFKGRVLRETMVGDIPAVIPEVEGSAHICGFANWIVDERDPLTYGFLVR</sequence>
<accession>Q0B950</accession>
<name>T3HPD_BURCM</name>
<gene>
    <name evidence="5" type="ordered locus">Bamb_3769</name>
</gene>
<protein>
    <recommendedName>
        <fullName evidence="3">Trans-3-hydroxy-L-proline dehydratase</fullName>
        <shortName>T3LHyp dehydratase</shortName>
        <shortName evidence="3">t3HypD</shortName>
        <ecNumber evidence="2">4.2.1.77</ecNumber>
    </recommendedName>
    <alternativeName>
        <fullName>Trans-L-3-hydroxyproline dehydratase</fullName>
    </alternativeName>
</protein>
<reference key="1">
    <citation type="submission" date="2006-08" db="EMBL/GenBank/DDBJ databases">
        <title>Complete sequence of chromosome 2 of Burkholderia cepacia AMMD.</title>
        <authorList>
            <person name="Copeland A."/>
            <person name="Lucas S."/>
            <person name="Lapidus A."/>
            <person name="Barry K."/>
            <person name="Detter J.C."/>
            <person name="Glavina del Rio T."/>
            <person name="Hammon N."/>
            <person name="Israni S."/>
            <person name="Pitluck S."/>
            <person name="Bruce D."/>
            <person name="Chain P."/>
            <person name="Malfatti S."/>
            <person name="Shin M."/>
            <person name="Vergez L."/>
            <person name="Schmutz J."/>
            <person name="Larimer F."/>
            <person name="Land M."/>
            <person name="Hauser L."/>
            <person name="Kyrpides N."/>
            <person name="Kim E."/>
            <person name="Parke J."/>
            <person name="Coenye T."/>
            <person name="Konstantinidis K."/>
            <person name="Ramette A."/>
            <person name="Tiedje J."/>
            <person name="Richardson P."/>
        </authorList>
    </citation>
    <scope>NUCLEOTIDE SEQUENCE [LARGE SCALE GENOMIC DNA]</scope>
    <source>
        <strain>ATCC BAA-244 / DSM 16087 / CCUG 44356 / LMG 19182 / AMMD</strain>
    </source>
</reference>
<reference key="2">
    <citation type="journal article" date="2014" name="Elife">
        <title>Prediction and characterization of enzymatic activities guided by sequence similarity and genome neighborhood networks.</title>
        <authorList>
            <person name="Zhao S."/>
            <person name="Sakai A."/>
            <person name="Zhang X."/>
            <person name="Vetting M.W."/>
            <person name="Kumar R."/>
            <person name="Hillerich B."/>
            <person name="San Francisco B."/>
            <person name="Solbiati J."/>
            <person name="Steves A."/>
            <person name="Brown S."/>
            <person name="Akiva E."/>
            <person name="Barber A."/>
            <person name="Seidel R.D."/>
            <person name="Babbitt P.C."/>
            <person name="Almo S.C."/>
            <person name="Gerlt J.A."/>
            <person name="Jacobson M.P."/>
        </authorList>
    </citation>
    <scope>FUNCTION</scope>
    <scope>CATALYTIC ACTIVITY</scope>
    <scope>BIOPHYSICOCHEMICAL PROPERTIES</scope>
</reference>
<organism>
    <name type="scientific">Burkholderia ambifaria (strain ATCC BAA-244 / DSM 16087 / CCUG 44356 / LMG 19182 / AMMD)</name>
    <name type="common">Burkholderia cepacia (strain AMMD)</name>
    <dbReference type="NCBI Taxonomy" id="339670"/>
    <lineage>
        <taxon>Bacteria</taxon>
        <taxon>Pseudomonadati</taxon>
        <taxon>Pseudomonadota</taxon>
        <taxon>Betaproteobacteria</taxon>
        <taxon>Burkholderiales</taxon>
        <taxon>Burkholderiaceae</taxon>
        <taxon>Burkholderia</taxon>
        <taxon>Burkholderia cepacia complex</taxon>
    </lineage>
</organism>
<proteinExistence type="evidence at protein level"/>